<comment type="catalytic activity">
    <reaction>
        <text>N-(5-phospho-beta-D-ribosyl)anthranilate = 1-(2-carboxyphenylamino)-1-deoxy-D-ribulose 5-phosphate</text>
        <dbReference type="Rhea" id="RHEA:21540"/>
        <dbReference type="ChEBI" id="CHEBI:18277"/>
        <dbReference type="ChEBI" id="CHEBI:58613"/>
        <dbReference type="EC" id="5.3.1.24"/>
    </reaction>
</comment>
<comment type="pathway">
    <text>Amino-acid biosynthesis; L-tryptophan biosynthesis; L-tryptophan from chorismate: step 3/5.</text>
</comment>
<comment type="similarity">
    <text evidence="1">Belongs to the TrpF family.</text>
</comment>
<evidence type="ECO:0000305" key="1"/>
<proteinExistence type="inferred from homology"/>
<feature type="chain" id="PRO_0000154358" description="N-(5'-phosphoribosyl)anthranilate isomerase">
    <location>
        <begin position="1"/>
        <end position="199"/>
    </location>
</feature>
<keyword id="KW-0028">Amino-acid biosynthesis</keyword>
<keyword id="KW-0057">Aromatic amino acid biosynthesis</keyword>
<keyword id="KW-0413">Isomerase</keyword>
<keyword id="KW-0822">Tryptophan biosynthesis</keyword>
<protein>
    <recommendedName>
        <fullName>N-(5'-phosphoribosyl)anthranilate isomerase</fullName>
        <shortName>PRAI</shortName>
        <ecNumber>5.3.1.24</ecNumber>
    </recommendedName>
</protein>
<dbReference type="EC" id="5.3.1.24"/>
<dbReference type="EMBL" id="D00496">
    <property type="protein sequence ID" value="BAA00385.1"/>
    <property type="molecule type" value="Genomic_DNA"/>
</dbReference>
<dbReference type="PIR" id="S42345">
    <property type="entry name" value="JS0342"/>
</dbReference>
<dbReference type="SMR" id="P17218"/>
<dbReference type="PATRIC" id="fig|1582.48.peg.474"/>
<dbReference type="eggNOG" id="COG0135">
    <property type="taxonomic scope" value="Bacteria"/>
</dbReference>
<dbReference type="UniPathway" id="UPA00035">
    <property type="reaction ID" value="UER00042"/>
</dbReference>
<dbReference type="GO" id="GO:0004640">
    <property type="term" value="F:phosphoribosylanthranilate isomerase activity"/>
    <property type="evidence" value="ECO:0007669"/>
    <property type="project" value="UniProtKB-UniRule"/>
</dbReference>
<dbReference type="GO" id="GO:0000162">
    <property type="term" value="P:L-tryptophan biosynthetic process"/>
    <property type="evidence" value="ECO:0007669"/>
    <property type="project" value="UniProtKB-UniRule"/>
</dbReference>
<dbReference type="CDD" id="cd00405">
    <property type="entry name" value="PRAI"/>
    <property type="match status" value="1"/>
</dbReference>
<dbReference type="Gene3D" id="3.20.20.70">
    <property type="entry name" value="Aldolase class I"/>
    <property type="match status" value="1"/>
</dbReference>
<dbReference type="HAMAP" id="MF_00135">
    <property type="entry name" value="PRAI"/>
    <property type="match status" value="1"/>
</dbReference>
<dbReference type="InterPro" id="IPR013785">
    <property type="entry name" value="Aldolase_TIM"/>
</dbReference>
<dbReference type="InterPro" id="IPR001240">
    <property type="entry name" value="PRAI_dom"/>
</dbReference>
<dbReference type="InterPro" id="IPR011060">
    <property type="entry name" value="RibuloseP-bd_barrel"/>
</dbReference>
<dbReference type="InterPro" id="IPR044643">
    <property type="entry name" value="TrpF_fam"/>
</dbReference>
<dbReference type="PANTHER" id="PTHR42894">
    <property type="entry name" value="N-(5'-PHOSPHORIBOSYL)ANTHRANILATE ISOMERASE"/>
    <property type="match status" value="1"/>
</dbReference>
<dbReference type="PANTHER" id="PTHR42894:SF1">
    <property type="entry name" value="N-(5'-PHOSPHORIBOSYL)ANTHRANILATE ISOMERASE"/>
    <property type="match status" value="1"/>
</dbReference>
<dbReference type="Pfam" id="PF00697">
    <property type="entry name" value="PRAI"/>
    <property type="match status" value="1"/>
</dbReference>
<dbReference type="SUPFAM" id="SSF51366">
    <property type="entry name" value="Ribulose-phoshate binding barrel"/>
    <property type="match status" value="1"/>
</dbReference>
<sequence>MVLVKICGLMHSEDILAVNTAGADFAGFVFAPGRHQVSLEQALALNQLLHSKIKTVGVFVNEPVAEILAIYQAGAIDVAQLHGKSTPAEITQLQQAGLKVIQVFERQAIDLTSMADYLMVDSGKGSGQLLNLKAIPHISRPLILAGGLTPLNVRQAVQLVQPTMVDVSSGVETNGHKDADKITQFIQQAKEDIIYEDIK</sequence>
<organism>
    <name type="scientific">Lacticaseibacillus casei</name>
    <name type="common">Lactobacillus casei</name>
    <dbReference type="NCBI Taxonomy" id="1582"/>
    <lineage>
        <taxon>Bacteria</taxon>
        <taxon>Bacillati</taxon>
        <taxon>Bacillota</taxon>
        <taxon>Bacilli</taxon>
        <taxon>Lactobacillales</taxon>
        <taxon>Lactobacillaceae</taxon>
        <taxon>Lacticaseibacillus</taxon>
    </lineage>
</organism>
<accession>P17218</accession>
<gene>
    <name type="primary">trpF</name>
</gene>
<name>TRPF_LACCA</name>
<reference key="1">
    <citation type="journal article" date="1990" name="J. Biochem.">
        <title>Nucleotide sequences and genomic constitution of five tryptophan genes of Lactobacillus casei.</title>
        <authorList>
            <person name="Natori Y."/>
            <person name="Kano Y."/>
            <person name="Imamoto F."/>
        </authorList>
    </citation>
    <scope>NUCLEOTIDE SEQUENCE [GENOMIC DNA]</scope>
</reference>